<gene>
    <name evidence="1" type="primary">panC</name>
    <name type="ordered locus">Atu3482</name>
    <name type="ORF">AGR_L_2698</name>
</gene>
<reference key="1">
    <citation type="journal article" date="2001" name="Science">
        <title>The genome of the natural genetic engineer Agrobacterium tumefaciens C58.</title>
        <authorList>
            <person name="Wood D.W."/>
            <person name="Setubal J.C."/>
            <person name="Kaul R."/>
            <person name="Monks D.E."/>
            <person name="Kitajima J.P."/>
            <person name="Okura V.K."/>
            <person name="Zhou Y."/>
            <person name="Chen L."/>
            <person name="Wood G.E."/>
            <person name="Almeida N.F. Jr."/>
            <person name="Woo L."/>
            <person name="Chen Y."/>
            <person name="Paulsen I.T."/>
            <person name="Eisen J.A."/>
            <person name="Karp P.D."/>
            <person name="Bovee D. Sr."/>
            <person name="Chapman P."/>
            <person name="Clendenning J."/>
            <person name="Deatherage G."/>
            <person name="Gillet W."/>
            <person name="Grant C."/>
            <person name="Kutyavin T."/>
            <person name="Levy R."/>
            <person name="Li M.-J."/>
            <person name="McClelland E."/>
            <person name="Palmieri A."/>
            <person name="Raymond C."/>
            <person name="Rouse G."/>
            <person name="Saenphimmachak C."/>
            <person name="Wu Z."/>
            <person name="Romero P."/>
            <person name="Gordon D."/>
            <person name="Zhang S."/>
            <person name="Yoo H."/>
            <person name="Tao Y."/>
            <person name="Biddle P."/>
            <person name="Jung M."/>
            <person name="Krespan W."/>
            <person name="Perry M."/>
            <person name="Gordon-Kamm B."/>
            <person name="Liao L."/>
            <person name="Kim S."/>
            <person name="Hendrick C."/>
            <person name="Zhao Z.-Y."/>
            <person name="Dolan M."/>
            <person name="Chumley F."/>
            <person name="Tingey S.V."/>
            <person name="Tomb J.-F."/>
            <person name="Gordon M.P."/>
            <person name="Olson M.V."/>
            <person name="Nester E.W."/>
        </authorList>
    </citation>
    <scope>NUCLEOTIDE SEQUENCE [LARGE SCALE GENOMIC DNA]</scope>
    <source>
        <strain>C58 / ATCC 33970</strain>
    </source>
</reference>
<reference key="2">
    <citation type="journal article" date="2001" name="Science">
        <title>Genome sequence of the plant pathogen and biotechnology agent Agrobacterium tumefaciens C58.</title>
        <authorList>
            <person name="Goodner B."/>
            <person name="Hinkle G."/>
            <person name="Gattung S."/>
            <person name="Miller N."/>
            <person name="Blanchard M."/>
            <person name="Qurollo B."/>
            <person name="Goldman B.S."/>
            <person name="Cao Y."/>
            <person name="Askenazi M."/>
            <person name="Halling C."/>
            <person name="Mullin L."/>
            <person name="Houmiel K."/>
            <person name="Gordon J."/>
            <person name="Vaudin M."/>
            <person name="Iartchouk O."/>
            <person name="Epp A."/>
            <person name="Liu F."/>
            <person name="Wollam C."/>
            <person name="Allinger M."/>
            <person name="Doughty D."/>
            <person name="Scott C."/>
            <person name="Lappas C."/>
            <person name="Markelz B."/>
            <person name="Flanagan C."/>
            <person name="Crowell C."/>
            <person name="Gurson J."/>
            <person name="Lomo C."/>
            <person name="Sear C."/>
            <person name="Strub G."/>
            <person name="Cielo C."/>
            <person name="Slater S."/>
        </authorList>
    </citation>
    <scope>NUCLEOTIDE SEQUENCE [LARGE SCALE GENOMIC DNA]</scope>
    <source>
        <strain>C58 / ATCC 33970</strain>
    </source>
</reference>
<evidence type="ECO:0000255" key="1">
    <source>
        <dbReference type="HAMAP-Rule" id="MF_00158"/>
    </source>
</evidence>
<organism>
    <name type="scientific">Agrobacterium fabrum (strain C58 / ATCC 33970)</name>
    <name type="common">Agrobacterium tumefaciens (strain C58)</name>
    <dbReference type="NCBI Taxonomy" id="176299"/>
    <lineage>
        <taxon>Bacteria</taxon>
        <taxon>Pseudomonadati</taxon>
        <taxon>Pseudomonadota</taxon>
        <taxon>Alphaproteobacteria</taxon>
        <taxon>Hyphomicrobiales</taxon>
        <taxon>Rhizobiaceae</taxon>
        <taxon>Rhizobium/Agrobacterium group</taxon>
        <taxon>Agrobacterium</taxon>
        <taxon>Agrobacterium tumefaciens complex</taxon>
    </lineage>
</organism>
<feature type="chain" id="PRO_0000128196" description="Pantothenate synthetase">
    <location>
        <begin position="1"/>
        <end position="292"/>
    </location>
</feature>
<feature type="active site" description="Proton donor" evidence="1">
    <location>
        <position position="37"/>
    </location>
</feature>
<feature type="binding site" evidence="1">
    <location>
        <begin position="30"/>
        <end position="37"/>
    </location>
    <ligand>
        <name>ATP</name>
        <dbReference type="ChEBI" id="CHEBI:30616"/>
    </ligand>
</feature>
<feature type="binding site" evidence="1">
    <location>
        <position position="61"/>
    </location>
    <ligand>
        <name>(R)-pantoate</name>
        <dbReference type="ChEBI" id="CHEBI:15980"/>
    </ligand>
</feature>
<feature type="binding site" evidence="1">
    <location>
        <position position="61"/>
    </location>
    <ligand>
        <name>beta-alanine</name>
        <dbReference type="ChEBI" id="CHEBI:57966"/>
    </ligand>
</feature>
<feature type="binding site" evidence="1">
    <location>
        <begin position="147"/>
        <end position="150"/>
    </location>
    <ligand>
        <name>ATP</name>
        <dbReference type="ChEBI" id="CHEBI:30616"/>
    </ligand>
</feature>
<feature type="binding site" evidence="1">
    <location>
        <position position="153"/>
    </location>
    <ligand>
        <name>(R)-pantoate</name>
        <dbReference type="ChEBI" id="CHEBI:15980"/>
    </ligand>
</feature>
<feature type="binding site" evidence="1">
    <location>
        <position position="176"/>
    </location>
    <ligand>
        <name>ATP</name>
        <dbReference type="ChEBI" id="CHEBI:30616"/>
    </ligand>
</feature>
<feature type="binding site" evidence="1">
    <location>
        <begin position="184"/>
        <end position="187"/>
    </location>
    <ligand>
        <name>ATP</name>
        <dbReference type="ChEBI" id="CHEBI:30616"/>
    </ligand>
</feature>
<dbReference type="EC" id="6.3.2.1" evidence="1"/>
<dbReference type="EMBL" id="AE007870">
    <property type="protein sequence ID" value="AAK89912.2"/>
    <property type="molecule type" value="Genomic_DNA"/>
</dbReference>
<dbReference type="PIR" id="AI2984">
    <property type="entry name" value="AI2984"/>
</dbReference>
<dbReference type="PIR" id="F98298">
    <property type="entry name" value="F98298"/>
</dbReference>
<dbReference type="RefSeq" id="NP_357127.2">
    <property type="nucleotide sequence ID" value="NC_003063.2"/>
</dbReference>
<dbReference type="RefSeq" id="WP_010973078.1">
    <property type="nucleotide sequence ID" value="NC_003063.2"/>
</dbReference>
<dbReference type="SMR" id="Q8UA92"/>
<dbReference type="STRING" id="176299.Atu3482"/>
<dbReference type="EnsemblBacteria" id="AAK89912">
    <property type="protein sequence ID" value="AAK89912"/>
    <property type="gene ID" value="Atu3482"/>
</dbReference>
<dbReference type="GeneID" id="1135356"/>
<dbReference type="KEGG" id="atu:Atu3482"/>
<dbReference type="PATRIC" id="fig|176299.10.peg.3321"/>
<dbReference type="eggNOG" id="COG0414">
    <property type="taxonomic scope" value="Bacteria"/>
</dbReference>
<dbReference type="HOGENOM" id="CLU_047148_0_0_5"/>
<dbReference type="OrthoDB" id="9773087at2"/>
<dbReference type="PhylomeDB" id="Q8UA92"/>
<dbReference type="BioCyc" id="AGRO:ATU3482-MONOMER"/>
<dbReference type="UniPathway" id="UPA00028">
    <property type="reaction ID" value="UER00005"/>
</dbReference>
<dbReference type="Proteomes" id="UP000000813">
    <property type="component" value="Chromosome linear"/>
</dbReference>
<dbReference type="GO" id="GO:0005829">
    <property type="term" value="C:cytosol"/>
    <property type="evidence" value="ECO:0007669"/>
    <property type="project" value="TreeGrafter"/>
</dbReference>
<dbReference type="GO" id="GO:0005524">
    <property type="term" value="F:ATP binding"/>
    <property type="evidence" value="ECO:0007669"/>
    <property type="project" value="UniProtKB-KW"/>
</dbReference>
<dbReference type="GO" id="GO:0004592">
    <property type="term" value="F:pantoate-beta-alanine ligase activity"/>
    <property type="evidence" value="ECO:0007669"/>
    <property type="project" value="UniProtKB-UniRule"/>
</dbReference>
<dbReference type="GO" id="GO:0015940">
    <property type="term" value="P:pantothenate biosynthetic process"/>
    <property type="evidence" value="ECO:0007669"/>
    <property type="project" value="UniProtKB-UniRule"/>
</dbReference>
<dbReference type="CDD" id="cd00560">
    <property type="entry name" value="PanC"/>
    <property type="match status" value="1"/>
</dbReference>
<dbReference type="FunFam" id="3.40.50.620:FF:000013">
    <property type="entry name" value="Pantothenate synthetase"/>
    <property type="match status" value="1"/>
</dbReference>
<dbReference type="Gene3D" id="3.40.50.620">
    <property type="entry name" value="HUPs"/>
    <property type="match status" value="1"/>
</dbReference>
<dbReference type="Gene3D" id="3.30.1300.10">
    <property type="entry name" value="Pantoate-beta-alanine ligase, C-terminal domain"/>
    <property type="match status" value="1"/>
</dbReference>
<dbReference type="HAMAP" id="MF_00158">
    <property type="entry name" value="PanC"/>
    <property type="match status" value="1"/>
</dbReference>
<dbReference type="InterPro" id="IPR004821">
    <property type="entry name" value="Cyt_trans-like"/>
</dbReference>
<dbReference type="InterPro" id="IPR003721">
    <property type="entry name" value="Pantoate_ligase"/>
</dbReference>
<dbReference type="InterPro" id="IPR042176">
    <property type="entry name" value="Pantoate_ligase_C"/>
</dbReference>
<dbReference type="InterPro" id="IPR014729">
    <property type="entry name" value="Rossmann-like_a/b/a_fold"/>
</dbReference>
<dbReference type="NCBIfam" id="TIGR00125">
    <property type="entry name" value="cyt_tran_rel"/>
    <property type="match status" value="1"/>
</dbReference>
<dbReference type="NCBIfam" id="TIGR00018">
    <property type="entry name" value="panC"/>
    <property type="match status" value="1"/>
</dbReference>
<dbReference type="PANTHER" id="PTHR21299">
    <property type="entry name" value="CYTIDYLATE KINASE/PANTOATE-BETA-ALANINE LIGASE"/>
    <property type="match status" value="1"/>
</dbReference>
<dbReference type="PANTHER" id="PTHR21299:SF1">
    <property type="entry name" value="PANTOATE--BETA-ALANINE LIGASE"/>
    <property type="match status" value="1"/>
</dbReference>
<dbReference type="Pfam" id="PF02569">
    <property type="entry name" value="Pantoate_ligase"/>
    <property type="match status" value="1"/>
</dbReference>
<dbReference type="SUPFAM" id="SSF52374">
    <property type="entry name" value="Nucleotidylyl transferase"/>
    <property type="match status" value="1"/>
</dbReference>
<sequence>MRLVKTVAELRDAIAAFRRAGKTIGFVPTMGFLHIGHLTLVARAKAENDATVVSIFVNPLQFGANEDLARYPRDLARDSALLQEAGVDILFAPDVTEMYPRPIQTVVDVPELGSQLEGAVRPGHFAGVTTVVTKLFNLVQPDAAYFGEKDYQQVTLVRRMVEDLAQPVRVIPVATVREADGLACSSRNVYLSPEQRAAAVIVPHALDEAERLYAEGVDDPAAIEAAIEKFIAAEPLASPEVVAVRDPDTLAPVASLQAGPVLVALFVRFGSTRLLDNRVIGREKTAEQEAAQ</sequence>
<keyword id="KW-0067">ATP-binding</keyword>
<keyword id="KW-0963">Cytoplasm</keyword>
<keyword id="KW-0436">Ligase</keyword>
<keyword id="KW-0547">Nucleotide-binding</keyword>
<keyword id="KW-0566">Pantothenate biosynthesis</keyword>
<keyword id="KW-1185">Reference proteome</keyword>
<accession>Q8UA92</accession>
<protein>
    <recommendedName>
        <fullName evidence="1">Pantothenate synthetase</fullName>
        <shortName evidence="1">PS</shortName>
        <ecNumber evidence="1">6.3.2.1</ecNumber>
    </recommendedName>
    <alternativeName>
        <fullName evidence="1">Pantoate--beta-alanine ligase</fullName>
    </alternativeName>
    <alternativeName>
        <fullName evidence="1">Pantoate-activating enzyme</fullName>
    </alternativeName>
</protein>
<comment type="function">
    <text evidence="1">Catalyzes the condensation of pantoate with beta-alanine in an ATP-dependent reaction via a pantoyl-adenylate intermediate.</text>
</comment>
<comment type="catalytic activity">
    <reaction evidence="1">
        <text>(R)-pantoate + beta-alanine + ATP = (R)-pantothenate + AMP + diphosphate + H(+)</text>
        <dbReference type="Rhea" id="RHEA:10912"/>
        <dbReference type="ChEBI" id="CHEBI:15378"/>
        <dbReference type="ChEBI" id="CHEBI:15980"/>
        <dbReference type="ChEBI" id="CHEBI:29032"/>
        <dbReference type="ChEBI" id="CHEBI:30616"/>
        <dbReference type="ChEBI" id="CHEBI:33019"/>
        <dbReference type="ChEBI" id="CHEBI:57966"/>
        <dbReference type="ChEBI" id="CHEBI:456215"/>
        <dbReference type="EC" id="6.3.2.1"/>
    </reaction>
</comment>
<comment type="pathway">
    <text evidence="1">Cofactor biosynthesis; (R)-pantothenate biosynthesis; (R)-pantothenate from (R)-pantoate and beta-alanine: step 1/1.</text>
</comment>
<comment type="subunit">
    <text evidence="1">Homodimer.</text>
</comment>
<comment type="subcellular location">
    <subcellularLocation>
        <location evidence="1">Cytoplasm</location>
    </subcellularLocation>
</comment>
<comment type="miscellaneous">
    <text evidence="1">The reaction proceeds by a bi uni uni bi ping pong mechanism.</text>
</comment>
<comment type="similarity">
    <text evidence="1">Belongs to the pantothenate synthetase family.</text>
</comment>
<name>PANC_AGRFC</name>
<proteinExistence type="inferred from homology"/>